<organism>
    <name type="scientific">Caenorhabditis elegans</name>
    <dbReference type="NCBI Taxonomy" id="6239"/>
    <lineage>
        <taxon>Eukaryota</taxon>
        <taxon>Metazoa</taxon>
        <taxon>Ecdysozoa</taxon>
        <taxon>Nematoda</taxon>
        <taxon>Chromadorea</taxon>
        <taxon>Rhabditida</taxon>
        <taxon>Rhabditina</taxon>
        <taxon>Rhabditomorpha</taxon>
        <taxon>Rhabditoidea</taxon>
        <taxon>Rhabditidae</taxon>
        <taxon>Peloderinae</taxon>
        <taxon>Caenorhabditis</taxon>
    </lineage>
</organism>
<comment type="catalytic activity">
    <reaction evidence="3">
        <text>tRNA(Val) + L-valine + ATP = L-valyl-tRNA(Val) + AMP + diphosphate</text>
        <dbReference type="Rhea" id="RHEA:10704"/>
        <dbReference type="Rhea" id="RHEA-COMP:9672"/>
        <dbReference type="Rhea" id="RHEA-COMP:9708"/>
        <dbReference type="ChEBI" id="CHEBI:30616"/>
        <dbReference type="ChEBI" id="CHEBI:33019"/>
        <dbReference type="ChEBI" id="CHEBI:57762"/>
        <dbReference type="ChEBI" id="CHEBI:78442"/>
        <dbReference type="ChEBI" id="CHEBI:78537"/>
        <dbReference type="ChEBI" id="CHEBI:456215"/>
        <dbReference type="EC" id="6.1.1.9"/>
    </reaction>
</comment>
<comment type="similarity">
    <text evidence="1">Belongs to the class-I aminoacyl-tRNA synthetase family.</text>
</comment>
<protein>
    <recommendedName>
        <fullName>Valine--tRNA ligase</fullName>
        <ecNumber>6.1.1.9</ecNumber>
    </recommendedName>
    <alternativeName>
        <fullName>Valyl-tRNA synthetase</fullName>
        <shortName>ValRS</shortName>
    </alternativeName>
</protein>
<sequence>MSDPAGNRPKTEKELKKEAEKAAKLAKFEEKQKKLAEKKAAASDKPVKEAKAKKEQTVEAAEPVDQTPTGQRKKIDGEIPAAYFPGYVESGWYSWWEKEGFFKPEYIDKLNPGSNPADSFTVCIPPPNVTGNLHVGHALATTVEDTITRFNRMHGKRTLFNPGCDHAGIATQVVVEKRLKRERGLTRHDLGRDRFNQEVWHWKNEKGDVIYDQFRKLGASVDWDRAVFTMDPKMCRAVTEAFIRMHESGTIYRSNRLVNWSCALRSAISDIEVDKKELTGSTLIAVPGYDKKIEFGVLNSFAYKIQGSDEEIVVSTTRIETMLGDSGVAVHPDDQRYKHLVGKQCIHPFIPTRNLPIFADSFVEMEFGTGAVKITPAHDHNDYEVGIRQNLPFHNCITDDGLISQGCGEFSGMKRFDARTAVIEALKEKGLYRGKEDNPMVVPTCSRSKDVIEPILKPQWYVKCAHMAEKAVAAVANGDLQIIPEFHKATWNRWLESSRDWCISRQLWWGHRIPAYYISFADGREQPLPEENYWVSARTEQEALAKAAQKFQVPEAEILLKWDEDVLDTWFSSGMWPFAVFGWPDATKDMDLFFPGAVLETGHDILFFWVARMVFMAQELTGKLPFKEILLHAMIRDAHGRKMSKSLGNVIDPLDVIRGISLNDLQAQLLGGNLDEKEIAVAKEGQARDYPDGIPECGVDALRFALLSYTSQGRDINLDVLRVHGYRKFCNKLWQVVRFALARISDKPEQKPTFEINLKSATPTDLWILSRLAKAVKETNEALKAYNFTQATTVTYNFWLYDFCDVYVETIKPVLYGDNTTLRQVAISVLHKCIDTGLRLISPLMPFISEELWQRMPRLDDSDYTSPSIIVAQYPLTQKYEKYQNEKLEAAFEFAQELIGKVRSLRADYDLKKTKITMQILSETPEDESMLNDISAVITTLTFSEKVSILNKCESDKIEKGSAHIACGGRCQVYINLTGIIDVPKEIEKLGAKLQKNQISVKKIGDIQSSADYEQKVPVDIRALDQEKKATLEKEIENITAAIAQLKALN</sequence>
<feature type="chain" id="PRO_0000252086" description="Valine--tRNA ligase">
    <location>
        <begin position="1"/>
        <end position="1050"/>
    </location>
</feature>
<feature type="region of interest" description="Disordered" evidence="2">
    <location>
        <begin position="37"/>
        <end position="72"/>
    </location>
</feature>
<feature type="short sequence motif" description="'HIGH' region" evidence="1">
    <location>
        <begin position="127"/>
        <end position="137"/>
    </location>
</feature>
<feature type="short sequence motif" description="'KMSKS' region" evidence="1">
    <location>
        <begin position="642"/>
        <end position="646"/>
    </location>
</feature>
<feature type="compositionally biased region" description="Basic and acidic residues" evidence="2">
    <location>
        <begin position="37"/>
        <end position="57"/>
    </location>
</feature>
<feature type="binding site" evidence="1">
    <location>
        <position position="645"/>
    </location>
    <ligand>
        <name>ATP</name>
        <dbReference type="ChEBI" id="CHEBI:30616"/>
    </ligand>
</feature>
<evidence type="ECO:0000255" key="1"/>
<evidence type="ECO:0000256" key="2">
    <source>
        <dbReference type="SAM" id="MobiDB-lite"/>
    </source>
</evidence>
<evidence type="ECO:0000305" key="3"/>
<evidence type="ECO:0000312" key="4">
    <source>
        <dbReference type="EMBL" id="CAB60428.1"/>
    </source>
</evidence>
<evidence type="ECO:0000312" key="5">
    <source>
        <dbReference type="WormBase" id="Y87G2A.5"/>
    </source>
</evidence>
<gene>
    <name evidence="5" type="primary">glp-4</name>
    <name evidence="5" type="synonym">vars-2</name>
    <name evidence="5" type="synonym">vrs-2</name>
    <name evidence="5" type="ORF">Y87G2A.5</name>
</gene>
<proteinExistence type="evidence at protein level"/>
<dbReference type="EC" id="6.1.1.9"/>
<dbReference type="EMBL" id="AL110500">
    <property type="protein sequence ID" value="CAB60428.1"/>
    <property type="molecule type" value="Genomic_DNA"/>
</dbReference>
<dbReference type="RefSeq" id="NP_493377.1">
    <property type="nucleotide sequence ID" value="NM_060976.7"/>
</dbReference>
<dbReference type="SMR" id="Q9U1Q4"/>
<dbReference type="BioGRID" id="38618">
    <property type="interactions" value="13"/>
</dbReference>
<dbReference type="FunCoup" id="Q9U1Q4">
    <property type="interactions" value="2689"/>
</dbReference>
<dbReference type="STRING" id="6239.Y87G2A.5.2"/>
<dbReference type="iPTMnet" id="Q9U1Q4"/>
<dbReference type="PaxDb" id="6239-Y87G2A.5"/>
<dbReference type="PeptideAtlas" id="Q9U1Q4"/>
<dbReference type="EnsemblMetazoa" id="Y87G2A.5.1">
    <property type="protein sequence ID" value="Y87G2A.5.1"/>
    <property type="gene ID" value="WBGene00006936"/>
</dbReference>
<dbReference type="GeneID" id="173224"/>
<dbReference type="KEGG" id="cel:CELE_Y87G2A.5"/>
<dbReference type="UCSC" id="Y87G2A.5">
    <property type="organism name" value="c. elegans"/>
</dbReference>
<dbReference type="AGR" id="WB:WBGene00006936"/>
<dbReference type="CTD" id="173224"/>
<dbReference type="WormBase" id="Y87G2A.5">
    <property type="protein sequence ID" value="CE24685"/>
    <property type="gene ID" value="WBGene00006936"/>
    <property type="gene designation" value="glp-4"/>
</dbReference>
<dbReference type="eggNOG" id="KOG0432">
    <property type="taxonomic scope" value="Eukaryota"/>
</dbReference>
<dbReference type="GeneTree" id="ENSGT00940000167981"/>
<dbReference type="HOGENOM" id="CLU_001493_0_1_1"/>
<dbReference type="InParanoid" id="Q9U1Q4"/>
<dbReference type="OMA" id="LDTWMDS"/>
<dbReference type="OrthoDB" id="629407at2759"/>
<dbReference type="PhylomeDB" id="Q9U1Q4"/>
<dbReference type="BRENDA" id="6.1.1.9">
    <property type="organism ID" value="1045"/>
</dbReference>
<dbReference type="PRO" id="PR:Q9U1Q4"/>
<dbReference type="Proteomes" id="UP000001940">
    <property type="component" value="Chromosome I"/>
</dbReference>
<dbReference type="Bgee" id="WBGene00006936">
    <property type="expression patterns" value="Expressed in larva and 4 other cell types or tissues"/>
</dbReference>
<dbReference type="GO" id="GO:0005829">
    <property type="term" value="C:cytosol"/>
    <property type="evidence" value="ECO:0000318"/>
    <property type="project" value="GO_Central"/>
</dbReference>
<dbReference type="GO" id="GO:0002161">
    <property type="term" value="F:aminoacyl-tRNA deacylase activity"/>
    <property type="evidence" value="ECO:0007669"/>
    <property type="project" value="InterPro"/>
</dbReference>
<dbReference type="GO" id="GO:0005524">
    <property type="term" value="F:ATP binding"/>
    <property type="evidence" value="ECO:0007669"/>
    <property type="project" value="UniProtKB-KW"/>
</dbReference>
<dbReference type="GO" id="GO:0004832">
    <property type="term" value="F:valine-tRNA ligase activity"/>
    <property type="evidence" value="ECO:0000318"/>
    <property type="project" value="GO_Central"/>
</dbReference>
<dbReference type="GO" id="GO:0008340">
    <property type="term" value="P:determination of adult lifespan"/>
    <property type="evidence" value="ECO:0000315"/>
    <property type="project" value="UniProtKB"/>
</dbReference>
<dbReference type="GO" id="GO:0006438">
    <property type="term" value="P:valyl-tRNA aminoacylation"/>
    <property type="evidence" value="ECO:0000318"/>
    <property type="project" value="GO_Central"/>
</dbReference>
<dbReference type="CDD" id="cd07962">
    <property type="entry name" value="Anticodon_Ia_Val"/>
    <property type="match status" value="1"/>
</dbReference>
<dbReference type="CDD" id="cd00817">
    <property type="entry name" value="ValRS_core"/>
    <property type="match status" value="1"/>
</dbReference>
<dbReference type="FunFam" id="1.10.730.10:FF:000009">
    <property type="entry name" value="Valine--tRNA ligase, mitochondrial"/>
    <property type="match status" value="1"/>
</dbReference>
<dbReference type="FunFam" id="3.40.50.620:FF:000020">
    <property type="entry name" value="Valine--tRNA ligase, mitochondrial"/>
    <property type="match status" value="1"/>
</dbReference>
<dbReference type="FunFam" id="3.90.740.10:FF:000005">
    <property type="entry name" value="Valine--tRNA ligase, mitochondrial"/>
    <property type="match status" value="1"/>
</dbReference>
<dbReference type="FunFam" id="3.40.50.620:FF:000197">
    <property type="entry name" value="Valyl tRNA synthetase"/>
    <property type="match status" value="1"/>
</dbReference>
<dbReference type="Gene3D" id="3.40.50.620">
    <property type="entry name" value="HUPs"/>
    <property type="match status" value="2"/>
</dbReference>
<dbReference type="Gene3D" id="1.10.730.10">
    <property type="entry name" value="Isoleucyl-tRNA Synthetase, Domain 1"/>
    <property type="match status" value="1"/>
</dbReference>
<dbReference type="Gene3D" id="1.10.287.380">
    <property type="entry name" value="Valyl-tRNA synthetase, C-terminal domain"/>
    <property type="match status" value="1"/>
</dbReference>
<dbReference type="Gene3D" id="3.90.740.10">
    <property type="entry name" value="Valyl/Leucyl/Isoleucyl-tRNA synthetase, editing domain"/>
    <property type="match status" value="1"/>
</dbReference>
<dbReference type="HAMAP" id="MF_02004">
    <property type="entry name" value="Val_tRNA_synth_type1"/>
    <property type="match status" value="1"/>
</dbReference>
<dbReference type="InterPro" id="IPR001412">
    <property type="entry name" value="aa-tRNA-synth_I_CS"/>
</dbReference>
<dbReference type="InterPro" id="IPR002300">
    <property type="entry name" value="aa-tRNA-synth_Ia"/>
</dbReference>
<dbReference type="InterPro" id="IPR033705">
    <property type="entry name" value="Anticodon_Ia_Val"/>
</dbReference>
<dbReference type="InterPro" id="IPR013155">
    <property type="entry name" value="M/V/L/I-tRNA-synth_anticd-bd"/>
</dbReference>
<dbReference type="InterPro" id="IPR014729">
    <property type="entry name" value="Rossmann-like_a/b/a_fold"/>
</dbReference>
<dbReference type="InterPro" id="IPR009080">
    <property type="entry name" value="tRNAsynth_Ia_anticodon-bd"/>
</dbReference>
<dbReference type="InterPro" id="IPR037118">
    <property type="entry name" value="Val-tRNA_synth_C_sf"/>
</dbReference>
<dbReference type="InterPro" id="IPR009008">
    <property type="entry name" value="Val/Leu/Ile-tRNA-synth_edit"/>
</dbReference>
<dbReference type="InterPro" id="IPR002303">
    <property type="entry name" value="Valyl-tRNA_ligase"/>
</dbReference>
<dbReference type="NCBIfam" id="NF004349">
    <property type="entry name" value="PRK05729.1"/>
    <property type="match status" value="1"/>
</dbReference>
<dbReference type="NCBIfam" id="TIGR00422">
    <property type="entry name" value="valS"/>
    <property type="match status" value="1"/>
</dbReference>
<dbReference type="PANTHER" id="PTHR11946:SF109">
    <property type="entry name" value="VALINE--TRNA LIGASE"/>
    <property type="match status" value="1"/>
</dbReference>
<dbReference type="PANTHER" id="PTHR11946">
    <property type="entry name" value="VALYL-TRNA SYNTHETASES"/>
    <property type="match status" value="1"/>
</dbReference>
<dbReference type="Pfam" id="PF08264">
    <property type="entry name" value="Anticodon_1"/>
    <property type="match status" value="1"/>
</dbReference>
<dbReference type="Pfam" id="PF00133">
    <property type="entry name" value="tRNA-synt_1"/>
    <property type="match status" value="1"/>
</dbReference>
<dbReference type="PRINTS" id="PR00986">
    <property type="entry name" value="TRNASYNTHVAL"/>
</dbReference>
<dbReference type="SUPFAM" id="SSF47323">
    <property type="entry name" value="Anticodon-binding domain of a subclass of class I aminoacyl-tRNA synthetases"/>
    <property type="match status" value="1"/>
</dbReference>
<dbReference type="SUPFAM" id="SSF52374">
    <property type="entry name" value="Nucleotidylyl transferase"/>
    <property type="match status" value="1"/>
</dbReference>
<dbReference type="SUPFAM" id="SSF50677">
    <property type="entry name" value="ValRS/IleRS/LeuRS editing domain"/>
    <property type="match status" value="1"/>
</dbReference>
<dbReference type="PROSITE" id="PS00178">
    <property type="entry name" value="AA_TRNA_LIGASE_I"/>
    <property type="match status" value="1"/>
</dbReference>
<reference evidence="4" key="1">
    <citation type="journal article" date="1998" name="Science">
        <title>Genome sequence of the nematode C. elegans: a platform for investigating biology.</title>
        <authorList>
            <consortium name="The C. elegans sequencing consortium"/>
        </authorList>
    </citation>
    <scope>NUCLEOTIDE SEQUENCE [LARGE SCALE GENOMIC DNA]</scope>
    <source>
        <strain>Bristol N2</strain>
    </source>
</reference>
<reference evidence="3 4" key="2">
    <citation type="submission" date="2006-03" db="UniProtKB">
        <authorList>
            <person name="Bienvenut W.V."/>
        </authorList>
    </citation>
    <scope>PROTEIN SEQUENCE OF 513-524; 646-658; 704-714 AND 760-771</scope>
    <scope>IDENTIFICATION BY MASS SPECTROMETRY</scope>
</reference>
<keyword id="KW-0030">Aminoacyl-tRNA synthetase</keyword>
<keyword id="KW-0067">ATP-binding</keyword>
<keyword id="KW-0903">Direct protein sequencing</keyword>
<keyword id="KW-0436">Ligase</keyword>
<keyword id="KW-0547">Nucleotide-binding</keyword>
<keyword id="KW-0648">Protein biosynthesis</keyword>
<keyword id="KW-1185">Reference proteome</keyword>
<name>SYV_CAEEL</name>
<accession>Q9U1Q4</accession>